<accession>O32255</accession>
<feature type="chain" id="PRO_0000105822" description="Uncharacterized HTH-type transcriptional regulator YvbU">
    <location>
        <begin position="1"/>
        <end position="292"/>
    </location>
</feature>
<feature type="domain" description="HTH lysR-type" evidence="1">
    <location>
        <begin position="1"/>
        <end position="59"/>
    </location>
</feature>
<feature type="DNA-binding region" description="H-T-H motif" evidence="1">
    <location>
        <begin position="18"/>
        <end position="37"/>
    </location>
</feature>
<keyword id="KW-0238">DNA-binding</keyword>
<keyword id="KW-1185">Reference proteome</keyword>
<keyword id="KW-0804">Transcription</keyword>
<keyword id="KW-0805">Transcription regulation</keyword>
<reference key="1">
    <citation type="journal article" date="1997" name="Nature">
        <title>The complete genome sequence of the Gram-positive bacterium Bacillus subtilis.</title>
        <authorList>
            <person name="Kunst F."/>
            <person name="Ogasawara N."/>
            <person name="Moszer I."/>
            <person name="Albertini A.M."/>
            <person name="Alloni G."/>
            <person name="Azevedo V."/>
            <person name="Bertero M.G."/>
            <person name="Bessieres P."/>
            <person name="Bolotin A."/>
            <person name="Borchert S."/>
            <person name="Borriss R."/>
            <person name="Boursier L."/>
            <person name="Brans A."/>
            <person name="Braun M."/>
            <person name="Brignell S.C."/>
            <person name="Bron S."/>
            <person name="Brouillet S."/>
            <person name="Bruschi C.V."/>
            <person name="Caldwell B."/>
            <person name="Capuano V."/>
            <person name="Carter N.M."/>
            <person name="Choi S.-K."/>
            <person name="Codani J.-J."/>
            <person name="Connerton I.F."/>
            <person name="Cummings N.J."/>
            <person name="Daniel R.A."/>
            <person name="Denizot F."/>
            <person name="Devine K.M."/>
            <person name="Duesterhoeft A."/>
            <person name="Ehrlich S.D."/>
            <person name="Emmerson P.T."/>
            <person name="Entian K.-D."/>
            <person name="Errington J."/>
            <person name="Fabret C."/>
            <person name="Ferrari E."/>
            <person name="Foulger D."/>
            <person name="Fritz C."/>
            <person name="Fujita M."/>
            <person name="Fujita Y."/>
            <person name="Fuma S."/>
            <person name="Galizzi A."/>
            <person name="Galleron N."/>
            <person name="Ghim S.-Y."/>
            <person name="Glaser P."/>
            <person name="Goffeau A."/>
            <person name="Golightly E.J."/>
            <person name="Grandi G."/>
            <person name="Guiseppi G."/>
            <person name="Guy B.J."/>
            <person name="Haga K."/>
            <person name="Haiech J."/>
            <person name="Harwood C.R."/>
            <person name="Henaut A."/>
            <person name="Hilbert H."/>
            <person name="Holsappel S."/>
            <person name="Hosono S."/>
            <person name="Hullo M.-F."/>
            <person name="Itaya M."/>
            <person name="Jones L.-M."/>
            <person name="Joris B."/>
            <person name="Karamata D."/>
            <person name="Kasahara Y."/>
            <person name="Klaerr-Blanchard M."/>
            <person name="Klein C."/>
            <person name="Kobayashi Y."/>
            <person name="Koetter P."/>
            <person name="Koningstein G."/>
            <person name="Krogh S."/>
            <person name="Kumano M."/>
            <person name="Kurita K."/>
            <person name="Lapidus A."/>
            <person name="Lardinois S."/>
            <person name="Lauber J."/>
            <person name="Lazarevic V."/>
            <person name="Lee S.-M."/>
            <person name="Levine A."/>
            <person name="Liu H."/>
            <person name="Masuda S."/>
            <person name="Mauel C."/>
            <person name="Medigue C."/>
            <person name="Medina N."/>
            <person name="Mellado R.P."/>
            <person name="Mizuno M."/>
            <person name="Moestl D."/>
            <person name="Nakai S."/>
            <person name="Noback M."/>
            <person name="Noone D."/>
            <person name="O'Reilly M."/>
            <person name="Ogawa K."/>
            <person name="Ogiwara A."/>
            <person name="Oudega B."/>
            <person name="Park S.-H."/>
            <person name="Parro V."/>
            <person name="Pohl T.M."/>
            <person name="Portetelle D."/>
            <person name="Porwollik S."/>
            <person name="Prescott A.M."/>
            <person name="Presecan E."/>
            <person name="Pujic P."/>
            <person name="Purnelle B."/>
            <person name="Rapoport G."/>
            <person name="Rey M."/>
            <person name="Reynolds S."/>
            <person name="Rieger M."/>
            <person name="Rivolta C."/>
            <person name="Rocha E."/>
            <person name="Roche B."/>
            <person name="Rose M."/>
            <person name="Sadaie Y."/>
            <person name="Sato T."/>
            <person name="Scanlan E."/>
            <person name="Schleich S."/>
            <person name="Schroeter R."/>
            <person name="Scoffone F."/>
            <person name="Sekiguchi J."/>
            <person name="Sekowska A."/>
            <person name="Seror S.J."/>
            <person name="Serror P."/>
            <person name="Shin B.-S."/>
            <person name="Soldo B."/>
            <person name="Sorokin A."/>
            <person name="Tacconi E."/>
            <person name="Takagi T."/>
            <person name="Takahashi H."/>
            <person name="Takemaru K."/>
            <person name="Takeuchi M."/>
            <person name="Tamakoshi A."/>
            <person name="Tanaka T."/>
            <person name="Terpstra P."/>
            <person name="Tognoni A."/>
            <person name="Tosato V."/>
            <person name="Uchiyama S."/>
            <person name="Vandenbol M."/>
            <person name="Vannier F."/>
            <person name="Vassarotti A."/>
            <person name="Viari A."/>
            <person name="Wambutt R."/>
            <person name="Wedler E."/>
            <person name="Wedler H."/>
            <person name="Weitzenegger T."/>
            <person name="Winters P."/>
            <person name="Wipat A."/>
            <person name="Yamamoto H."/>
            <person name="Yamane K."/>
            <person name="Yasumoto K."/>
            <person name="Yata K."/>
            <person name="Yoshida K."/>
            <person name="Yoshikawa H.-F."/>
            <person name="Zumstein E."/>
            <person name="Yoshikawa H."/>
            <person name="Danchin A."/>
        </authorList>
    </citation>
    <scope>NUCLEOTIDE SEQUENCE [LARGE SCALE GENOMIC DNA]</scope>
    <source>
        <strain>168</strain>
    </source>
</reference>
<comment type="similarity">
    <text evidence="2">Belongs to the LysR transcriptional regulatory family.</text>
</comment>
<evidence type="ECO:0000255" key="1">
    <source>
        <dbReference type="PROSITE-ProRule" id="PRU00253"/>
    </source>
</evidence>
<evidence type="ECO:0000305" key="2"/>
<proteinExistence type="inferred from homology"/>
<gene>
    <name type="primary">yvbU</name>
    <name type="ordered locus">BSU33990</name>
</gene>
<dbReference type="EMBL" id="AL009126">
    <property type="protein sequence ID" value="CAB15404.1"/>
    <property type="molecule type" value="Genomic_DNA"/>
</dbReference>
<dbReference type="PIR" id="E70030">
    <property type="entry name" value="E70030"/>
</dbReference>
<dbReference type="RefSeq" id="NP_391279.1">
    <property type="nucleotide sequence ID" value="NC_000964.3"/>
</dbReference>
<dbReference type="RefSeq" id="WP_003243271.1">
    <property type="nucleotide sequence ID" value="NZ_OZ025638.1"/>
</dbReference>
<dbReference type="SMR" id="O32255"/>
<dbReference type="FunCoup" id="O32255">
    <property type="interactions" value="79"/>
</dbReference>
<dbReference type="STRING" id="224308.BSU33990"/>
<dbReference type="PaxDb" id="224308-BSU33990"/>
<dbReference type="EnsemblBacteria" id="CAB15404">
    <property type="protein sequence ID" value="CAB15404"/>
    <property type="gene ID" value="BSU_33990"/>
</dbReference>
<dbReference type="GeneID" id="937711"/>
<dbReference type="KEGG" id="bsu:BSU33990"/>
<dbReference type="PATRIC" id="fig|224308.179.peg.3685"/>
<dbReference type="eggNOG" id="COG0583">
    <property type="taxonomic scope" value="Bacteria"/>
</dbReference>
<dbReference type="InParanoid" id="O32255"/>
<dbReference type="OrthoDB" id="63123at2"/>
<dbReference type="PhylomeDB" id="O32255"/>
<dbReference type="BioCyc" id="BSUB:BSU33990-MONOMER"/>
<dbReference type="Proteomes" id="UP000001570">
    <property type="component" value="Chromosome"/>
</dbReference>
<dbReference type="GO" id="GO:0005829">
    <property type="term" value="C:cytosol"/>
    <property type="evidence" value="ECO:0000318"/>
    <property type="project" value="GO_Central"/>
</dbReference>
<dbReference type="GO" id="GO:0003700">
    <property type="term" value="F:DNA-binding transcription factor activity"/>
    <property type="evidence" value="ECO:0007669"/>
    <property type="project" value="InterPro"/>
</dbReference>
<dbReference type="GO" id="GO:0043565">
    <property type="term" value="F:sequence-specific DNA binding"/>
    <property type="evidence" value="ECO:0000318"/>
    <property type="project" value="GO_Central"/>
</dbReference>
<dbReference type="GO" id="GO:0006355">
    <property type="term" value="P:regulation of DNA-templated transcription"/>
    <property type="evidence" value="ECO:0000318"/>
    <property type="project" value="GO_Central"/>
</dbReference>
<dbReference type="CDD" id="cd05466">
    <property type="entry name" value="PBP2_LTTR_substrate"/>
    <property type="match status" value="1"/>
</dbReference>
<dbReference type="FunFam" id="1.10.10.10:FF:000455">
    <property type="entry name" value="LysR family transcriptional regulator"/>
    <property type="match status" value="1"/>
</dbReference>
<dbReference type="Gene3D" id="3.40.190.10">
    <property type="entry name" value="Periplasmic binding protein-like II"/>
    <property type="match status" value="2"/>
</dbReference>
<dbReference type="Gene3D" id="1.10.10.10">
    <property type="entry name" value="Winged helix-like DNA-binding domain superfamily/Winged helix DNA-binding domain"/>
    <property type="match status" value="1"/>
</dbReference>
<dbReference type="InterPro" id="IPR050950">
    <property type="entry name" value="HTH-type_LysR_regulators"/>
</dbReference>
<dbReference type="InterPro" id="IPR005119">
    <property type="entry name" value="LysR_subst-bd"/>
</dbReference>
<dbReference type="InterPro" id="IPR000847">
    <property type="entry name" value="Tscrpt_reg_HTH_LysR"/>
</dbReference>
<dbReference type="InterPro" id="IPR036388">
    <property type="entry name" value="WH-like_DNA-bd_sf"/>
</dbReference>
<dbReference type="InterPro" id="IPR036390">
    <property type="entry name" value="WH_DNA-bd_sf"/>
</dbReference>
<dbReference type="PANTHER" id="PTHR30419:SF24">
    <property type="entry name" value="HTH-TYPE TRANSCRIPTIONAL REGULATOR CZCR"/>
    <property type="match status" value="1"/>
</dbReference>
<dbReference type="PANTHER" id="PTHR30419">
    <property type="entry name" value="HTH-TYPE TRANSCRIPTIONAL REGULATOR YBHD"/>
    <property type="match status" value="1"/>
</dbReference>
<dbReference type="Pfam" id="PF00126">
    <property type="entry name" value="HTH_1"/>
    <property type="match status" value="1"/>
</dbReference>
<dbReference type="Pfam" id="PF03466">
    <property type="entry name" value="LysR_substrate"/>
    <property type="match status" value="1"/>
</dbReference>
<dbReference type="PRINTS" id="PR00039">
    <property type="entry name" value="HTHLYSR"/>
</dbReference>
<dbReference type="SUPFAM" id="SSF53850">
    <property type="entry name" value="Periplasmic binding protein-like II"/>
    <property type="match status" value="1"/>
</dbReference>
<dbReference type="SUPFAM" id="SSF46785">
    <property type="entry name" value="Winged helix' DNA-binding domain"/>
    <property type="match status" value="1"/>
</dbReference>
<dbReference type="PROSITE" id="PS50931">
    <property type="entry name" value="HTH_LYSR"/>
    <property type="match status" value="1"/>
</dbReference>
<sequence>MTITQLKVFVKIAETGSFTKAGQALNMTQPAVSHAISAIEAELDVKLIIRDRRNGLMLTDTGKQILVHIREVLKGIEKVEQVAAAEKGLELGTIHIGTFSTASAYFMPKLISEFKQKYPKLELVLHEGTVNEVKEWLHTRMIDVGILLYPTEEMEYIHLKKDKMAVVLRDDHPLASHSAITLKDLDHEPMIVCDGGYESPFIDMFRQAGATLHPAFTVYNINTSISMIREGLGLAILSEMSMSGMPLPEHVVTRELDPQVYRDVQLAVPSLKEASLAAKLFIEMAKELFGAE</sequence>
<name>YVBU_BACSU</name>
<protein>
    <recommendedName>
        <fullName>Uncharacterized HTH-type transcriptional regulator YvbU</fullName>
    </recommendedName>
</protein>
<organism>
    <name type="scientific">Bacillus subtilis (strain 168)</name>
    <dbReference type="NCBI Taxonomy" id="224308"/>
    <lineage>
        <taxon>Bacteria</taxon>
        <taxon>Bacillati</taxon>
        <taxon>Bacillota</taxon>
        <taxon>Bacilli</taxon>
        <taxon>Bacillales</taxon>
        <taxon>Bacillaceae</taxon>
        <taxon>Bacillus</taxon>
    </lineage>
</organism>